<sequence length="440" mass="47777">MGSSHLLNKGLPLGIRPPIMNGPMHPRPLVALLDGRDCTVEMPILKDVATVAFCDAQSTQEIHEKVLNEAVGALMYHTITLTREDLEKFKALRIIVRIGSGFDNIDIKSAGDLGIAVCNVPAASVEETADSTMCHILNLYRRTTWLHQALREGTRVQSVEQIREVASGAARIRGETLGIIGLGRVGQAVALRAKTFGFNVFFYDPYLSDGIERALGLQRVSTLQDLLFHSDCVTLHCGLNEHNHHLINDFTIKQMRQGAFLVNTARGGLVDEKALAQALKEGRIRGAALDVHESEPFSFTQGPLKDAPNLICTPHAAWYSEQASIEMREEAAREIRRAITGRIPDSLKNCVNKDHLTAATHWASMDPGVVHPELNGGAYRYPQGVVSVAPAGLPAAVEGIVPSAMSLSHAHPAVAHPPHAPSPGQTIKPEADRDHPSDQL</sequence>
<organism>
    <name type="scientific">Xenopus laevis</name>
    <name type="common">African clawed frog</name>
    <dbReference type="NCBI Taxonomy" id="8355"/>
    <lineage>
        <taxon>Eukaryota</taxon>
        <taxon>Metazoa</taxon>
        <taxon>Chordata</taxon>
        <taxon>Craniata</taxon>
        <taxon>Vertebrata</taxon>
        <taxon>Euteleostomi</taxon>
        <taxon>Amphibia</taxon>
        <taxon>Batrachia</taxon>
        <taxon>Anura</taxon>
        <taxon>Pipoidea</taxon>
        <taxon>Pipidae</taxon>
        <taxon>Xenopodinae</taxon>
        <taxon>Xenopus</taxon>
        <taxon>Xenopus</taxon>
    </lineage>
</organism>
<protein>
    <recommendedName>
        <fullName>C-terminal-binding protein 1</fullName>
        <shortName>CtBP1</shortName>
        <ecNumber>1.1.1.-</ecNumber>
    </recommendedName>
    <alternativeName>
        <fullName>C-terminal-binding protein A</fullName>
    </alternativeName>
</protein>
<reference key="1">
    <citation type="journal article" date="1999" name="Mol. Cell. Biol.">
        <title>C-terminal binding protein is a transcriptional repressor that interacts with a specific class of vertebrate polycomb proteins.</title>
        <authorList>
            <person name="Sewalt R.G.A.B."/>
            <person name="Gunster M.J."/>
            <person name="van der Vlag J."/>
            <person name="Satijn D.P.E."/>
            <person name="Otte A.P."/>
        </authorList>
    </citation>
    <scope>NUCLEOTIDE SEQUENCE [MRNA]</scope>
</reference>
<feature type="chain" id="PRO_0000076046" description="C-terminal-binding protein 1">
    <location>
        <begin position="1"/>
        <end position="440"/>
    </location>
</feature>
<feature type="region of interest" description="Disordered" evidence="3">
    <location>
        <begin position="409"/>
        <end position="440"/>
    </location>
</feature>
<feature type="compositionally biased region" description="Basic and acidic residues" evidence="3">
    <location>
        <begin position="429"/>
        <end position="440"/>
    </location>
</feature>
<feature type="active site" evidence="1">
    <location>
        <position position="266"/>
    </location>
</feature>
<feature type="active site" evidence="1">
    <location>
        <position position="295"/>
    </location>
</feature>
<feature type="active site" description="Proton donor" evidence="1">
    <location>
        <position position="315"/>
    </location>
</feature>
<feature type="binding site" evidence="1">
    <location>
        <position position="100"/>
    </location>
    <ligand>
        <name>NAD(+)</name>
        <dbReference type="ChEBI" id="CHEBI:57540"/>
    </ligand>
</feature>
<feature type="binding site" evidence="1">
    <location>
        <begin position="180"/>
        <end position="185"/>
    </location>
    <ligand>
        <name>NAD(+)</name>
        <dbReference type="ChEBI" id="CHEBI:57540"/>
    </ligand>
</feature>
<feature type="binding site" evidence="1">
    <location>
        <position position="204"/>
    </location>
    <ligand>
        <name>NAD(+)</name>
        <dbReference type="ChEBI" id="CHEBI:57540"/>
    </ligand>
</feature>
<feature type="binding site" evidence="1">
    <location>
        <begin position="237"/>
        <end position="243"/>
    </location>
    <ligand>
        <name>NAD(+)</name>
        <dbReference type="ChEBI" id="CHEBI:57540"/>
    </ligand>
</feature>
<feature type="binding site" evidence="1">
    <location>
        <begin position="264"/>
        <end position="266"/>
    </location>
    <ligand>
        <name>NAD(+)</name>
        <dbReference type="ChEBI" id="CHEBI:57540"/>
    </ligand>
</feature>
<feature type="binding site" evidence="1">
    <location>
        <position position="290"/>
    </location>
    <ligand>
        <name>NAD(+)</name>
        <dbReference type="ChEBI" id="CHEBI:57540"/>
    </ligand>
</feature>
<feature type="binding site" evidence="1">
    <location>
        <begin position="315"/>
        <end position="318"/>
    </location>
    <ligand>
        <name>NAD(+)</name>
        <dbReference type="ChEBI" id="CHEBI:57540"/>
    </ligand>
</feature>
<feature type="site" description="Cleavage; by CAPN1" evidence="2">
    <location>
        <begin position="375"/>
        <end position="376"/>
    </location>
</feature>
<feature type="site" description="Cleavage; by CAPN1" evidence="2">
    <location>
        <begin position="387"/>
        <end position="388"/>
    </location>
</feature>
<feature type="site" description="Cleavage; by CAPN1 and CAPN3" evidence="2">
    <location>
        <begin position="409"/>
        <end position="410"/>
    </location>
</feature>
<accession>Q9YHU0</accession>
<keyword id="KW-0520">NAD</keyword>
<keyword id="KW-0539">Nucleus</keyword>
<keyword id="KW-0560">Oxidoreductase</keyword>
<keyword id="KW-1185">Reference proteome</keyword>
<comment type="function">
    <text>Corepressor targeting diverse transcription regulators. Has dehydrogenase activity.</text>
</comment>
<comment type="cofactor">
    <cofactor evidence="1">
        <name>NAD(+)</name>
        <dbReference type="ChEBI" id="CHEBI:57540"/>
    </cofactor>
</comment>
<comment type="subcellular location">
    <subcellularLocation>
        <location evidence="4">Nucleus</location>
    </subcellularLocation>
</comment>
<comment type="similarity">
    <text evidence="4">Belongs to the D-isomer specific 2-hydroxyacid dehydrogenase family.</text>
</comment>
<dbReference type="EC" id="1.1.1.-"/>
<dbReference type="EMBL" id="AF091554">
    <property type="protein sequence ID" value="AAD14596.1"/>
    <property type="molecule type" value="mRNA"/>
</dbReference>
<dbReference type="RefSeq" id="NP_001079151.1">
    <property type="nucleotide sequence ID" value="NM_001085682.1"/>
</dbReference>
<dbReference type="RefSeq" id="XP_018110260.1">
    <property type="nucleotide sequence ID" value="XM_018254771.1"/>
</dbReference>
<dbReference type="SMR" id="Q9YHU0"/>
<dbReference type="GeneID" id="373701"/>
<dbReference type="KEGG" id="xla:373701"/>
<dbReference type="AGR" id="Xenbase:XB-GENE-864974"/>
<dbReference type="CTD" id="373701"/>
<dbReference type="Xenbase" id="XB-GENE-864974">
    <property type="gene designation" value="ctbp1.L"/>
</dbReference>
<dbReference type="OrthoDB" id="9991913at2759"/>
<dbReference type="Proteomes" id="UP000186698">
    <property type="component" value="Chromosome 1L"/>
</dbReference>
<dbReference type="Bgee" id="373701">
    <property type="expression patterns" value="Expressed in internal ear and 20 other cell types or tissues"/>
</dbReference>
<dbReference type="GO" id="GO:0005634">
    <property type="term" value="C:nucleus"/>
    <property type="evidence" value="ECO:0000250"/>
    <property type="project" value="UniProtKB"/>
</dbReference>
<dbReference type="GO" id="GO:0140297">
    <property type="term" value="F:DNA-binding transcription factor binding"/>
    <property type="evidence" value="ECO:0000318"/>
    <property type="project" value="GO_Central"/>
</dbReference>
<dbReference type="GO" id="GO:0051287">
    <property type="term" value="F:NAD binding"/>
    <property type="evidence" value="ECO:0000250"/>
    <property type="project" value="UniProtKB"/>
</dbReference>
<dbReference type="GO" id="GO:0016616">
    <property type="term" value="F:oxidoreductase activity, acting on the CH-OH group of donors, NAD or NADP as acceptor"/>
    <property type="evidence" value="ECO:0000250"/>
    <property type="project" value="UniProtKB"/>
</dbReference>
<dbReference type="GO" id="GO:0003713">
    <property type="term" value="F:transcription coactivator activity"/>
    <property type="evidence" value="ECO:0000318"/>
    <property type="project" value="GO_Central"/>
</dbReference>
<dbReference type="GO" id="GO:0001221">
    <property type="term" value="F:transcription coregulator binding"/>
    <property type="evidence" value="ECO:0000318"/>
    <property type="project" value="GO_Central"/>
</dbReference>
<dbReference type="GO" id="GO:0003714">
    <property type="term" value="F:transcription corepressor activity"/>
    <property type="evidence" value="ECO:0000318"/>
    <property type="project" value="GO_Central"/>
</dbReference>
<dbReference type="GO" id="GO:0045892">
    <property type="term" value="P:negative regulation of DNA-templated transcription"/>
    <property type="evidence" value="ECO:0000250"/>
    <property type="project" value="UniProtKB"/>
</dbReference>
<dbReference type="GO" id="GO:0006357">
    <property type="term" value="P:regulation of transcription by RNA polymerase II"/>
    <property type="evidence" value="ECO:0000318"/>
    <property type="project" value="GO_Central"/>
</dbReference>
<dbReference type="CDD" id="cd05299">
    <property type="entry name" value="CtBP_dh"/>
    <property type="match status" value="1"/>
</dbReference>
<dbReference type="FunFam" id="3.40.50.720:FF:000012">
    <property type="entry name" value="C-terminal-binding protein 2 isoform 1"/>
    <property type="match status" value="1"/>
</dbReference>
<dbReference type="Gene3D" id="3.40.50.720">
    <property type="entry name" value="NAD(P)-binding Rossmann-like Domain"/>
    <property type="match status" value="2"/>
</dbReference>
<dbReference type="InterPro" id="IPR043322">
    <property type="entry name" value="CtBP"/>
</dbReference>
<dbReference type="InterPro" id="IPR051638">
    <property type="entry name" value="CTBP_dehydrogenase"/>
</dbReference>
<dbReference type="InterPro" id="IPR006139">
    <property type="entry name" value="D-isomer_2_OHA_DH_cat_dom"/>
</dbReference>
<dbReference type="InterPro" id="IPR029753">
    <property type="entry name" value="D-isomer_DH_CS"/>
</dbReference>
<dbReference type="InterPro" id="IPR029752">
    <property type="entry name" value="D-isomer_DH_CS1"/>
</dbReference>
<dbReference type="InterPro" id="IPR006140">
    <property type="entry name" value="D-isomer_DH_NAD-bd"/>
</dbReference>
<dbReference type="InterPro" id="IPR036291">
    <property type="entry name" value="NAD(P)-bd_dom_sf"/>
</dbReference>
<dbReference type="PANTHER" id="PTHR46029">
    <property type="entry name" value="C-TERMINAL-BINDING PROTEIN"/>
    <property type="match status" value="1"/>
</dbReference>
<dbReference type="PANTHER" id="PTHR46029:SF2">
    <property type="entry name" value="C-TERMINAL-BINDING PROTEIN 1"/>
    <property type="match status" value="1"/>
</dbReference>
<dbReference type="Pfam" id="PF00389">
    <property type="entry name" value="2-Hacid_dh"/>
    <property type="match status" value="1"/>
</dbReference>
<dbReference type="Pfam" id="PF02826">
    <property type="entry name" value="2-Hacid_dh_C"/>
    <property type="match status" value="1"/>
</dbReference>
<dbReference type="SUPFAM" id="SSF52283">
    <property type="entry name" value="Formate/glycerate dehydrogenase catalytic domain-like"/>
    <property type="match status" value="1"/>
</dbReference>
<dbReference type="SUPFAM" id="SSF51735">
    <property type="entry name" value="NAD(P)-binding Rossmann-fold domains"/>
    <property type="match status" value="1"/>
</dbReference>
<dbReference type="PROSITE" id="PS00065">
    <property type="entry name" value="D_2_HYDROXYACID_DH_1"/>
    <property type="match status" value="1"/>
</dbReference>
<dbReference type="PROSITE" id="PS00671">
    <property type="entry name" value="D_2_HYDROXYACID_DH_3"/>
    <property type="match status" value="1"/>
</dbReference>
<evidence type="ECO:0000250" key="1"/>
<evidence type="ECO:0000250" key="2">
    <source>
        <dbReference type="UniProtKB" id="Q13363"/>
    </source>
</evidence>
<evidence type="ECO:0000256" key="3">
    <source>
        <dbReference type="SAM" id="MobiDB-lite"/>
    </source>
</evidence>
<evidence type="ECO:0000305" key="4"/>
<proteinExistence type="evidence at transcript level"/>
<name>CTBP1_XENLA</name>
<gene>
    <name type="primary">ctbp1</name>
    <name type="synonym">ctbp-a</name>
</gene>